<comment type="function">
    <text evidence="1">Catalyzes the reduction of the glycolytic intermediate dihydroxyacetone phosphate (DHAP) to sn-glycerol 3-phosphate (G3P), the key precursor for phospholipid synthesis.</text>
</comment>
<comment type="catalytic activity">
    <reaction evidence="1">
        <text>sn-glycerol 3-phosphate + NAD(+) = dihydroxyacetone phosphate + NADH + H(+)</text>
        <dbReference type="Rhea" id="RHEA:11092"/>
        <dbReference type="ChEBI" id="CHEBI:15378"/>
        <dbReference type="ChEBI" id="CHEBI:57540"/>
        <dbReference type="ChEBI" id="CHEBI:57597"/>
        <dbReference type="ChEBI" id="CHEBI:57642"/>
        <dbReference type="ChEBI" id="CHEBI:57945"/>
        <dbReference type="EC" id="1.1.1.94"/>
    </reaction>
    <physiologicalReaction direction="right-to-left" evidence="1">
        <dbReference type="Rhea" id="RHEA:11094"/>
    </physiologicalReaction>
</comment>
<comment type="catalytic activity">
    <reaction evidence="1">
        <text>sn-glycerol 3-phosphate + NADP(+) = dihydroxyacetone phosphate + NADPH + H(+)</text>
        <dbReference type="Rhea" id="RHEA:11096"/>
        <dbReference type="ChEBI" id="CHEBI:15378"/>
        <dbReference type="ChEBI" id="CHEBI:57597"/>
        <dbReference type="ChEBI" id="CHEBI:57642"/>
        <dbReference type="ChEBI" id="CHEBI:57783"/>
        <dbReference type="ChEBI" id="CHEBI:58349"/>
        <dbReference type="EC" id="1.1.1.94"/>
    </reaction>
    <physiologicalReaction direction="right-to-left" evidence="1">
        <dbReference type="Rhea" id="RHEA:11098"/>
    </physiologicalReaction>
</comment>
<comment type="pathway">
    <text evidence="1">Membrane lipid metabolism; glycerophospholipid metabolism.</text>
</comment>
<comment type="subcellular location">
    <subcellularLocation>
        <location evidence="1">Cytoplasm</location>
    </subcellularLocation>
</comment>
<comment type="similarity">
    <text evidence="1">Belongs to the NAD-dependent glycerol-3-phosphate dehydrogenase family.</text>
</comment>
<gene>
    <name evidence="1" type="primary">gpsA</name>
    <name type="ordered locus">FTL_0372</name>
</gene>
<evidence type="ECO:0000255" key="1">
    <source>
        <dbReference type="HAMAP-Rule" id="MF_00394"/>
    </source>
</evidence>
<proteinExistence type="inferred from homology"/>
<protein>
    <recommendedName>
        <fullName evidence="1">Glycerol-3-phosphate dehydrogenase [NAD(P)+]</fullName>
        <ecNumber evidence="1">1.1.1.94</ecNumber>
    </recommendedName>
    <alternativeName>
        <fullName evidence="1">NAD(P)(+)-dependent glycerol-3-phosphate dehydrogenase</fullName>
    </alternativeName>
    <alternativeName>
        <fullName evidence="1">NAD(P)H-dependent dihydroxyacetone-phosphate reductase</fullName>
    </alternativeName>
</protein>
<keyword id="KW-0963">Cytoplasm</keyword>
<keyword id="KW-0444">Lipid biosynthesis</keyword>
<keyword id="KW-0443">Lipid metabolism</keyword>
<keyword id="KW-0520">NAD</keyword>
<keyword id="KW-0521">NADP</keyword>
<keyword id="KW-0547">Nucleotide-binding</keyword>
<keyword id="KW-0560">Oxidoreductase</keyword>
<keyword id="KW-0594">Phospholipid biosynthesis</keyword>
<keyword id="KW-1208">Phospholipid metabolism</keyword>
<keyword id="KW-1185">Reference proteome</keyword>
<reference key="1">
    <citation type="submission" date="2006-03" db="EMBL/GenBank/DDBJ databases">
        <title>Complete genome sequence of Francisella tularensis LVS (Live Vaccine Strain).</title>
        <authorList>
            <person name="Chain P."/>
            <person name="Larimer F."/>
            <person name="Land M."/>
            <person name="Stilwagen S."/>
            <person name="Larsson P."/>
            <person name="Bearden S."/>
            <person name="Chu M."/>
            <person name="Oyston P."/>
            <person name="Forsman M."/>
            <person name="Andersson S."/>
            <person name="Lindler L."/>
            <person name="Titball R."/>
            <person name="Garcia E."/>
        </authorList>
    </citation>
    <scope>NUCLEOTIDE SEQUENCE [LARGE SCALE GENOMIC DNA]</scope>
    <source>
        <strain>LVS</strain>
    </source>
</reference>
<feature type="chain" id="PRO_0000255314" description="Glycerol-3-phosphate dehydrogenase [NAD(P)+]">
    <location>
        <begin position="1"/>
        <end position="332"/>
    </location>
</feature>
<feature type="active site" description="Proton acceptor" evidence="1">
    <location>
        <position position="191"/>
    </location>
</feature>
<feature type="binding site" evidence="1">
    <location>
        <position position="13"/>
    </location>
    <ligand>
        <name>NADPH</name>
        <dbReference type="ChEBI" id="CHEBI:57783"/>
    </ligand>
</feature>
<feature type="binding site" evidence="1">
    <location>
        <position position="34"/>
    </location>
    <ligand>
        <name>NADPH</name>
        <dbReference type="ChEBI" id="CHEBI:57783"/>
    </ligand>
</feature>
<feature type="binding site" evidence="1">
    <location>
        <position position="108"/>
    </location>
    <ligand>
        <name>NADPH</name>
        <dbReference type="ChEBI" id="CHEBI:57783"/>
    </ligand>
</feature>
<feature type="binding site" evidence="1">
    <location>
        <position position="108"/>
    </location>
    <ligand>
        <name>sn-glycerol 3-phosphate</name>
        <dbReference type="ChEBI" id="CHEBI:57597"/>
    </ligand>
</feature>
<feature type="binding site" evidence="1">
    <location>
        <position position="136"/>
    </location>
    <ligand>
        <name>sn-glycerol 3-phosphate</name>
        <dbReference type="ChEBI" id="CHEBI:57597"/>
    </ligand>
</feature>
<feature type="binding site" evidence="1">
    <location>
        <position position="138"/>
    </location>
    <ligand>
        <name>sn-glycerol 3-phosphate</name>
        <dbReference type="ChEBI" id="CHEBI:57597"/>
    </ligand>
</feature>
<feature type="binding site" evidence="1">
    <location>
        <position position="140"/>
    </location>
    <ligand>
        <name>NADPH</name>
        <dbReference type="ChEBI" id="CHEBI:57783"/>
    </ligand>
</feature>
<feature type="binding site" evidence="1">
    <location>
        <position position="191"/>
    </location>
    <ligand>
        <name>sn-glycerol 3-phosphate</name>
        <dbReference type="ChEBI" id="CHEBI:57597"/>
    </ligand>
</feature>
<feature type="binding site" evidence="1">
    <location>
        <position position="244"/>
    </location>
    <ligand>
        <name>sn-glycerol 3-phosphate</name>
        <dbReference type="ChEBI" id="CHEBI:57597"/>
    </ligand>
</feature>
<feature type="binding site" evidence="1">
    <location>
        <position position="254"/>
    </location>
    <ligand>
        <name>sn-glycerol 3-phosphate</name>
        <dbReference type="ChEBI" id="CHEBI:57597"/>
    </ligand>
</feature>
<feature type="binding site" evidence="1">
    <location>
        <position position="255"/>
    </location>
    <ligand>
        <name>NADPH</name>
        <dbReference type="ChEBI" id="CHEBI:57783"/>
    </ligand>
</feature>
<feature type="binding site" evidence="1">
    <location>
        <position position="255"/>
    </location>
    <ligand>
        <name>sn-glycerol 3-phosphate</name>
        <dbReference type="ChEBI" id="CHEBI:57597"/>
    </ligand>
</feature>
<feature type="binding site" evidence="1">
    <location>
        <position position="256"/>
    </location>
    <ligand>
        <name>sn-glycerol 3-phosphate</name>
        <dbReference type="ChEBI" id="CHEBI:57597"/>
    </ligand>
</feature>
<feature type="binding site" evidence="1">
    <location>
        <position position="279"/>
    </location>
    <ligand>
        <name>NADPH</name>
        <dbReference type="ChEBI" id="CHEBI:57783"/>
    </ligand>
</feature>
<feature type="binding site" evidence="1">
    <location>
        <position position="281"/>
    </location>
    <ligand>
        <name>NADPH</name>
        <dbReference type="ChEBI" id="CHEBI:57783"/>
    </ligand>
</feature>
<name>GPDA_FRATH</name>
<dbReference type="EC" id="1.1.1.94" evidence="1"/>
<dbReference type="EMBL" id="AM233362">
    <property type="protein sequence ID" value="CAJ78812.1"/>
    <property type="molecule type" value="Genomic_DNA"/>
</dbReference>
<dbReference type="RefSeq" id="WP_003014572.1">
    <property type="nucleotide sequence ID" value="NZ_CP009694.1"/>
</dbReference>
<dbReference type="SMR" id="Q2A554"/>
<dbReference type="KEGG" id="ftl:FTL_0372"/>
<dbReference type="UniPathway" id="UPA00940"/>
<dbReference type="Proteomes" id="UP000001944">
    <property type="component" value="Chromosome"/>
</dbReference>
<dbReference type="GO" id="GO:0005829">
    <property type="term" value="C:cytosol"/>
    <property type="evidence" value="ECO:0007669"/>
    <property type="project" value="TreeGrafter"/>
</dbReference>
<dbReference type="GO" id="GO:0047952">
    <property type="term" value="F:glycerol-3-phosphate dehydrogenase [NAD(P)+] activity"/>
    <property type="evidence" value="ECO:0007669"/>
    <property type="project" value="UniProtKB-UniRule"/>
</dbReference>
<dbReference type="GO" id="GO:0051287">
    <property type="term" value="F:NAD binding"/>
    <property type="evidence" value="ECO:0007669"/>
    <property type="project" value="InterPro"/>
</dbReference>
<dbReference type="GO" id="GO:0005975">
    <property type="term" value="P:carbohydrate metabolic process"/>
    <property type="evidence" value="ECO:0007669"/>
    <property type="project" value="InterPro"/>
</dbReference>
<dbReference type="GO" id="GO:0046167">
    <property type="term" value="P:glycerol-3-phosphate biosynthetic process"/>
    <property type="evidence" value="ECO:0007669"/>
    <property type="project" value="UniProtKB-UniRule"/>
</dbReference>
<dbReference type="GO" id="GO:0046168">
    <property type="term" value="P:glycerol-3-phosphate catabolic process"/>
    <property type="evidence" value="ECO:0007669"/>
    <property type="project" value="InterPro"/>
</dbReference>
<dbReference type="GO" id="GO:0046474">
    <property type="term" value="P:glycerophospholipid biosynthetic process"/>
    <property type="evidence" value="ECO:0007669"/>
    <property type="project" value="TreeGrafter"/>
</dbReference>
<dbReference type="FunFam" id="1.10.1040.10:FF:000001">
    <property type="entry name" value="Glycerol-3-phosphate dehydrogenase [NAD(P)+]"/>
    <property type="match status" value="1"/>
</dbReference>
<dbReference type="FunFam" id="3.40.50.720:FF:000019">
    <property type="entry name" value="Glycerol-3-phosphate dehydrogenase [NAD(P)+]"/>
    <property type="match status" value="1"/>
</dbReference>
<dbReference type="Gene3D" id="1.10.1040.10">
    <property type="entry name" value="N-(1-d-carboxylethyl)-l-norvaline Dehydrogenase, domain 2"/>
    <property type="match status" value="1"/>
</dbReference>
<dbReference type="Gene3D" id="3.40.50.720">
    <property type="entry name" value="NAD(P)-binding Rossmann-like Domain"/>
    <property type="match status" value="1"/>
</dbReference>
<dbReference type="HAMAP" id="MF_00394">
    <property type="entry name" value="NAD_Glyc3P_dehydrog"/>
    <property type="match status" value="1"/>
</dbReference>
<dbReference type="InterPro" id="IPR008927">
    <property type="entry name" value="6-PGluconate_DH-like_C_sf"/>
</dbReference>
<dbReference type="InterPro" id="IPR013328">
    <property type="entry name" value="6PGD_dom2"/>
</dbReference>
<dbReference type="InterPro" id="IPR006168">
    <property type="entry name" value="G3P_DH_NAD-dep"/>
</dbReference>
<dbReference type="InterPro" id="IPR006109">
    <property type="entry name" value="G3P_DH_NAD-dep_C"/>
</dbReference>
<dbReference type="InterPro" id="IPR011128">
    <property type="entry name" value="G3P_DH_NAD-dep_N"/>
</dbReference>
<dbReference type="InterPro" id="IPR036291">
    <property type="entry name" value="NAD(P)-bd_dom_sf"/>
</dbReference>
<dbReference type="NCBIfam" id="NF000940">
    <property type="entry name" value="PRK00094.1-2"/>
    <property type="match status" value="1"/>
</dbReference>
<dbReference type="NCBIfam" id="NF000942">
    <property type="entry name" value="PRK00094.1-4"/>
    <property type="match status" value="1"/>
</dbReference>
<dbReference type="PANTHER" id="PTHR11728">
    <property type="entry name" value="GLYCEROL-3-PHOSPHATE DEHYDROGENASE"/>
    <property type="match status" value="1"/>
</dbReference>
<dbReference type="PANTHER" id="PTHR11728:SF1">
    <property type="entry name" value="GLYCEROL-3-PHOSPHATE DEHYDROGENASE [NAD(+)] 2, CHLOROPLASTIC"/>
    <property type="match status" value="1"/>
</dbReference>
<dbReference type="Pfam" id="PF07479">
    <property type="entry name" value="NAD_Gly3P_dh_C"/>
    <property type="match status" value="1"/>
</dbReference>
<dbReference type="Pfam" id="PF01210">
    <property type="entry name" value="NAD_Gly3P_dh_N"/>
    <property type="match status" value="1"/>
</dbReference>
<dbReference type="PIRSF" id="PIRSF000114">
    <property type="entry name" value="Glycerol-3-P_dh"/>
    <property type="match status" value="1"/>
</dbReference>
<dbReference type="PRINTS" id="PR00077">
    <property type="entry name" value="GPDHDRGNASE"/>
</dbReference>
<dbReference type="SUPFAM" id="SSF48179">
    <property type="entry name" value="6-phosphogluconate dehydrogenase C-terminal domain-like"/>
    <property type="match status" value="1"/>
</dbReference>
<dbReference type="SUPFAM" id="SSF51735">
    <property type="entry name" value="NAD(P)-binding Rossmann-fold domains"/>
    <property type="match status" value="1"/>
</dbReference>
<dbReference type="PROSITE" id="PS00957">
    <property type="entry name" value="NAD_G3PDH"/>
    <property type="match status" value="1"/>
</dbReference>
<organism>
    <name type="scientific">Francisella tularensis subsp. holarctica (strain LVS)</name>
    <dbReference type="NCBI Taxonomy" id="376619"/>
    <lineage>
        <taxon>Bacteria</taxon>
        <taxon>Pseudomonadati</taxon>
        <taxon>Pseudomonadota</taxon>
        <taxon>Gammaproteobacteria</taxon>
        <taxon>Thiotrichales</taxon>
        <taxon>Francisellaceae</taxon>
        <taxon>Francisella</taxon>
    </lineage>
</organism>
<accession>Q2A554</accession>
<sequence>MQKNILVLGAGAWGTALALQLAYRGHNVRINSWKAEHNEQMLKDNNNHKYLPSIEKFPSRLKAIQDWQANIIEFDSILVATPSSGFKNTILELKECILPQQNIISATKGFCHDSYALLSEIAEDILPTTKFALLTGPSFAKELANQLPTAVVVASKDINYARYVQELFSNENFRCYTTTDIIGAQVGGAVKNVLAITAGIAAGMEFGVNAHAALITRGLAEIKKLGLKLGANSETFIGLSCLGDLLLTCSDNQSRNRRFGLYLGQGMTIQQALKEVNNVVEGYFTAKAVYNFAKKHNVEMPLVFATYRILYEAADPRDIVKELMTRQLKNEN</sequence>